<protein>
    <recommendedName>
        <fullName evidence="1">Proline--tRNA ligase</fullName>
        <ecNumber evidence="1">6.1.1.15</ecNumber>
    </recommendedName>
    <alternativeName>
        <fullName evidence="1">Prolyl-tRNA synthetase</fullName>
        <shortName evidence="1">ProRS</shortName>
    </alternativeName>
</protein>
<dbReference type="EC" id="6.1.1.15" evidence="1"/>
<dbReference type="EMBL" id="CP000503">
    <property type="protein sequence ID" value="ABM24328.1"/>
    <property type="molecule type" value="Genomic_DNA"/>
</dbReference>
<dbReference type="RefSeq" id="WP_011788829.1">
    <property type="nucleotide sequence ID" value="NC_008750.1"/>
</dbReference>
<dbReference type="SMR" id="A1RI33"/>
<dbReference type="KEGG" id="shw:Sputw3181_1490"/>
<dbReference type="HOGENOM" id="CLU_016739_0_0_6"/>
<dbReference type="Proteomes" id="UP000002597">
    <property type="component" value="Chromosome"/>
</dbReference>
<dbReference type="GO" id="GO:0005829">
    <property type="term" value="C:cytosol"/>
    <property type="evidence" value="ECO:0007669"/>
    <property type="project" value="TreeGrafter"/>
</dbReference>
<dbReference type="GO" id="GO:0002161">
    <property type="term" value="F:aminoacyl-tRNA deacylase activity"/>
    <property type="evidence" value="ECO:0007669"/>
    <property type="project" value="InterPro"/>
</dbReference>
<dbReference type="GO" id="GO:0005524">
    <property type="term" value="F:ATP binding"/>
    <property type="evidence" value="ECO:0007669"/>
    <property type="project" value="UniProtKB-UniRule"/>
</dbReference>
<dbReference type="GO" id="GO:0004827">
    <property type="term" value="F:proline-tRNA ligase activity"/>
    <property type="evidence" value="ECO:0007669"/>
    <property type="project" value="UniProtKB-UniRule"/>
</dbReference>
<dbReference type="GO" id="GO:0006433">
    <property type="term" value="P:prolyl-tRNA aminoacylation"/>
    <property type="evidence" value="ECO:0007669"/>
    <property type="project" value="UniProtKB-UniRule"/>
</dbReference>
<dbReference type="CDD" id="cd04334">
    <property type="entry name" value="ProRS-INS"/>
    <property type="match status" value="1"/>
</dbReference>
<dbReference type="CDD" id="cd00861">
    <property type="entry name" value="ProRS_anticodon_short"/>
    <property type="match status" value="1"/>
</dbReference>
<dbReference type="CDD" id="cd00779">
    <property type="entry name" value="ProRS_core_prok"/>
    <property type="match status" value="1"/>
</dbReference>
<dbReference type="FunFam" id="3.30.930.10:FF:000043">
    <property type="entry name" value="Proline--tRNA ligase"/>
    <property type="match status" value="1"/>
</dbReference>
<dbReference type="FunFam" id="3.30.930.10:FF:000062">
    <property type="entry name" value="Proline--tRNA ligase"/>
    <property type="match status" value="1"/>
</dbReference>
<dbReference type="FunFam" id="3.40.50.800:FF:000006">
    <property type="entry name" value="Proline--tRNA ligase"/>
    <property type="match status" value="1"/>
</dbReference>
<dbReference type="FunFam" id="3.90.960.10:FF:000001">
    <property type="entry name" value="Proline--tRNA ligase"/>
    <property type="match status" value="1"/>
</dbReference>
<dbReference type="Gene3D" id="3.40.50.800">
    <property type="entry name" value="Anticodon-binding domain"/>
    <property type="match status" value="1"/>
</dbReference>
<dbReference type="Gene3D" id="3.30.930.10">
    <property type="entry name" value="Bira Bifunctional Protein, Domain 2"/>
    <property type="match status" value="2"/>
</dbReference>
<dbReference type="Gene3D" id="3.90.960.10">
    <property type="entry name" value="YbaK/aminoacyl-tRNA synthetase-associated domain"/>
    <property type="match status" value="1"/>
</dbReference>
<dbReference type="HAMAP" id="MF_01569">
    <property type="entry name" value="Pro_tRNA_synth_type1"/>
    <property type="match status" value="1"/>
</dbReference>
<dbReference type="InterPro" id="IPR002314">
    <property type="entry name" value="aa-tRNA-synt_IIb"/>
</dbReference>
<dbReference type="InterPro" id="IPR006195">
    <property type="entry name" value="aa-tRNA-synth_II"/>
</dbReference>
<dbReference type="InterPro" id="IPR045864">
    <property type="entry name" value="aa-tRNA-synth_II/BPL/LPL"/>
</dbReference>
<dbReference type="InterPro" id="IPR004154">
    <property type="entry name" value="Anticodon-bd"/>
</dbReference>
<dbReference type="InterPro" id="IPR036621">
    <property type="entry name" value="Anticodon-bd_dom_sf"/>
</dbReference>
<dbReference type="InterPro" id="IPR002316">
    <property type="entry name" value="Pro-tRNA-ligase_IIa"/>
</dbReference>
<dbReference type="InterPro" id="IPR004500">
    <property type="entry name" value="Pro-tRNA-synth_IIa_bac-type"/>
</dbReference>
<dbReference type="InterPro" id="IPR023717">
    <property type="entry name" value="Pro-tRNA-Synthase_IIa_type1"/>
</dbReference>
<dbReference type="InterPro" id="IPR050062">
    <property type="entry name" value="Pro-tRNA_synthetase"/>
</dbReference>
<dbReference type="InterPro" id="IPR044140">
    <property type="entry name" value="ProRS_anticodon_short"/>
</dbReference>
<dbReference type="InterPro" id="IPR033730">
    <property type="entry name" value="ProRS_core_prok"/>
</dbReference>
<dbReference type="InterPro" id="IPR036754">
    <property type="entry name" value="YbaK/aa-tRNA-synt-asso_dom_sf"/>
</dbReference>
<dbReference type="InterPro" id="IPR007214">
    <property type="entry name" value="YbaK/aa-tRNA-synth-assoc-dom"/>
</dbReference>
<dbReference type="NCBIfam" id="NF006625">
    <property type="entry name" value="PRK09194.1"/>
    <property type="match status" value="1"/>
</dbReference>
<dbReference type="NCBIfam" id="TIGR00409">
    <property type="entry name" value="proS_fam_II"/>
    <property type="match status" value="1"/>
</dbReference>
<dbReference type="PANTHER" id="PTHR42753">
    <property type="entry name" value="MITOCHONDRIAL RIBOSOME PROTEIN L39/PROLYL-TRNA LIGASE FAMILY MEMBER"/>
    <property type="match status" value="1"/>
</dbReference>
<dbReference type="PANTHER" id="PTHR42753:SF2">
    <property type="entry name" value="PROLINE--TRNA LIGASE"/>
    <property type="match status" value="1"/>
</dbReference>
<dbReference type="Pfam" id="PF03129">
    <property type="entry name" value="HGTP_anticodon"/>
    <property type="match status" value="1"/>
</dbReference>
<dbReference type="Pfam" id="PF00587">
    <property type="entry name" value="tRNA-synt_2b"/>
    <property type="match status" value="1"/>
</dbReference>
<dbReference type="Pfam" id="PF04073">
    <property type="entry name" value="tRNA_edit"/>
    <property type="match status" value="1"/>
</dbReference>
<dbReference type="PIRSF" id="PIRSF001535">
    <property type="entry name" value="ProRS_1"/>
    <property type="match status" value="1"/>
</dbReference>
<dbReference type="PRINTS" id="PR01046">
    <property type="entry name" value="TRNASYNTHPRO"/>
</dbReference>
<dbReference type="SUPFAM" id="SSF52954">
    <property type="entry name" value="Class II aaRS ABD-related"/>
    <property type="match status" value="1"/>
</dbReference>
<dbReference type="SUPFAM" id="SSF55681">
    <property type="entry name" value="Class II aaRS and biotin synthetases"/>
    <property type="match status" value="1"/>
</dbReference>
<dbReference type="SUPFAM" id="SSF55826">
    <property type="entry name" value="YbaK/ProRS associated domain"/>
    <property type="match status" value="1"/>
</dbReference>
<dbReference type="PROSITE" id="PS50862">
    <property type="entry name" value="AA_TRNA_LIGASE_II"/>
    <property type="match status" value="1"/>
</dbReference>
<evidence type="ECO:0000255" key="1">
    <source>
        <dbReference type="HAMAP-Rule" id="MF_01569"/>
    </source>
</evidence>
<name>SYP_SHESW</name>
<comment type="function">
    <text evidence="1">Catalyzes the attachment of proline to tRNA(Pro) in a two-step reaction: proline is first activated by ATP to form Pro-AMP and then transferred to the acceptor end of tRNA(Pro). As ProRS can inadvertently accommodate and process non-cognate amino acids such as alanine and cysteine, to avoid such errors it has two additional distinct editing activities against alanine. One activity is designated as 'pretransfer' editing and involves the tRNA(Pro)-independent hydrolysis of activated Ala-AMP. The other activity is designated 'posttransfer' editing and involves deacylation of mischarged Ala-tRNA(Pro). The misacylated Cys-tRNA(Pro) is not edited by ProRS.</text>
</comment>
<comment type="catalytic activity">
    <reaction evidence="1">
        <text>tRNA(Pro) + L-proline + ATP = L-prolyl-tRNA(Pro) + AMP + diphosphate</text>
        <dbReference type="Rhea" id="RHEA:14305"/>
        <dbReference type="Rhea" id="RHEA-COMP:9700"/>
        <dbReference type="Rhea" id="RHEA-COMP:9702"/>
        <dbReference type="ChEBI" id="CHEBI:30616"/>
        <dbReference type="ChEBI" id="CHEBI:33019"/>
        <dbReference type="ChEBI" id="CHEBI:60039"/>
        <dbReference type="ChEBI" id="CHEBI:78442"/>
        <dbReference type="ChEBI" id="CHEBI:78532"/>
        <dbReference type="ChEBI" id="CHEBI:456215"/>
        <dbReference type="EC" id="6.1.1.15"/>
    </reaction>
</comment>
<comment type="subunit">
    <text evidence="1">Homodimer.</text>
</comment>
<comment type="subcellular location">
    <subcellularLocation>
        <location evidence="1">Cytoplasm</location>
    </subcellularLocation>
</comment>
<comment type="domain">
    <text evidence="1">Consists of three domains: the N-terminal catalytic domain, the editing domain and the C-terminal anticodon-binding domain.</text>
</comment>
<comment type="similarity">
    <text evidence="1">Belongs to the class-II aminoacyl-tRNA synthetase family. ProS type 1 subfamily.</text>
</comment>
<accession>A1RI33</accession>
<organism>
    <name type="scientific">Shewanella sp. (strain W3-18-1)</name>
    <dbReference type="NCBI Taxonomy" id="351745"/>
    <lineage>
        <taxon>Bacteria</taxon>
        <taxon>Pseudomonadati</taxon>
        <taxon>Pseudomonadota</taxon>
        <taxon>Gammaproteobacteria</taxon>
        <taxon>Alteromonadales</taxon>
        <taxon>Shewanellaceae</taxon>
        <taxon>Shewanella</taxon>
    </lineage>
</organism>
<gene>
    <name evidence="1" type="primary">proS</name>
    <name type="ordered locus">Sputw3181_1490</name>
</gene>
<proteinExistence type="inferred from homology"/>
<feature type="chain" id="PRO_0000288379" description="Proline--tRNA ligase">
    <location>
        <begin position="1"/>
        <end position="571"/>
    </location>
</feature>
<reference key="1">
    <citation type="submission" date="2006-12" db="EMBL/GenBank/DDBJ databases">
        <title>Complete sequence of Shewanella sp. W3-18-1.</title>
        <authorList>
            <consortium name="US DOE Joint Genome Institute"/>
            <person name="Copeland A."/>
            <person name="Lucas S."/>
            <person name="Lapidus A."/>
            <person name="Barry K."/>
            <person name="Detter J.C."/>
            <person name="Glavina del Rio T."/>
            <person name="Hammon N."/>
            <person name="Israni S."/>
            <person name="Dalin E."/>
            <person name="Tice H."/>
            <person name="Pitluck S."/>
            <person name="Chain P."/>
            <person name="Malfatti S."/>
            <person name="Shin M."/>
            <person name="Vergez L."/>
            <person name="Schmutz J."/>
            <person name="Larimer F."/>
            <person name="Land M."/>
            <person name="Hauser L."/>
            <person name="Kyrpides N."/>
            <person name="Lykidis A."/>
            <person name="Tiedje J."/>
            <person name="Richardson P."/>
        </authorList>
    </citation>
    <scope>NUCLEOTIDE SEQUENCE [LARGE SCALE GENOMIC DNA]</scope>
    <source>
        <strain>W3-18-1</strain>
    </source>
</reference>
<keyword id="KW-0030">Aminoacyl-tRNA synthetase</keyword>
<keyword id="KW-0067">ATP-binding</keyword>
<keyword id="KW-0963">Cytoplasm</keyword>
<keyword id="KW-0436">Ligase</keyword>
<keyword id="KW-0547">Nucleotide-binding</keyword>
<keyword id="KW-0648">Protein biosynthesis</keyword>
<sequence>MRVSKYLLSTQKETPANAEVISHQLMLRAGMIRRNASGLYSYLPTGLRVLRKVEAIVREEMNKAGAIEILMPMVQPADLWVETGRWDKFGPELLRFKDRHNRDFVLGPTHEEVITDLIRKEVSSYKQLPLNLYQIQTKFRDEVRPRFGMMRSREFLMKDAYSFHLDVDTMNETYEAMYTAYSNILSRMGLAFRPVLADTGSIGGSMSHEFHVLAQSGEDLIAYSTGSDYAANIEKAESPMPTEPRGAATEALRLVDTPNAKTIAELVEQFDLDITKTVKTLIVKGATEAAPLVALIVRGDHELNEVKADKLDLVASPLEMAPEALIRDAIGAGPGSLGPVGLNMPIIIDHSVSVMSDFAAGANVDDKHYFGINWERDLPLAQAADIRNVVEGEPTPDGLGTYAMARGIEVGHIFQLGTNYSKSMNATVLDENGKSQVLLMGCYGVGVSRIVAAAIEQNFDDRGIVWPEAIAPFSVGILPMNMHKSHRVTDIAEQLYKDLSAAGIEVLLDDRKERPGVMFADMELIGIPHTVVIGDRNIDAGVFEYKNRRTGEKQDIPFDQLVDFLKNAVKS</sequence>